<keyword id="KW-0007">Acetylation</keyword>
<keyword id="KW-0597">Phosphoprotein</keyword>
<keyword id="KW-1185">Reference proteome</keyword>
<name>GRM2B_RAT</name>
<feature type="chain" id="PRO_0000087580" description="GRAM domain-containing protein 2B">
    <location>
        <begin position="1"/>
        <end position="445"/>
    </location>
</feature>
<feature type="domain" description="GRAM">
    <location>
        <begin position="123"/>
        <end position="190"/>
    </location>
</feature>
<feature type="region of interest" description="Disordered" evidence="3">
    <location>
        <begin position="1"/>
        <end position="119"/>
    </location>
</feature>
<feature type="region of interest" description="Disordered" evidence="3">
    <location>
        <begin position="277"/>
        <end position="331"/>
    </location>
</feature>
<feature type="compositionally biased region" description="Polar residues" evidence="3">
    <location>
        <begin position="1"/>
        <end position="10"/>
    </location>
</feature>
<feature type="compositionally biased region" description="Low complexity" evidence="3">
    <location>
        <begin position="18"/>
        <end position="37"/>
    </location>
</feature>
<feature type="compositionally biased region" description="Polar residues" evidence="3">
    <location>
        <begin position="56"/>
        <end position="68"/>
    </location>
</feature>
<feature type="compositionally biased region" description="Polar residues" evidence="3">
    <location>
        <begin position="82"/>
        <end position="93"/>
    </location>
</feature>
<feature type="compositionally biased region" description="Basic and acidic residues" evidence="3">
    <location>
        <begin position="94"/>
        <end position="112"/>
    </location>
</feature>
<feature type="compositionally biased region" description="Polar residues" evidence="3">
    <location>
        <begin position="281"/>
        <end position="291"/>
    </location>
</feature>
<feature type="compositionally biased region" description="Basic and acidic residues" evidence="3">
    <location>
        <begin position="311"/>
        <end position="330"/>
    </location>
</feature>
<feature type="modified residue" description="N-acetylmethionine" evidence="2">
    <location>
        <position position="1"/>
    </location>
</feature>
<feature type="modified residue" description="Phosphoserine" evidence="1">
    <location>
        <position position="238"/>
    </location>
</feature>
<feature type="modified residue" description="Phosphoserine" evidence="1">
    <location>
        <position position="255"/>
    </location>
</feature>
<feature type="modified residue" description="Phosphoserine" evidence="4">
    <location>
        <position position="265"/>
    </location>
</feature>
<sequence>MVKKPISSSDEVFKFEIPSSPKSSAGASHSSTDSPSSVFLSSEAENGVEDRKRFSKSPTAQSPTSSVEAESPDQKRSLGLWSKSSFDGSNLLSDKNDCKTESKADSKTERKKSSSSSQYKANMHFHKLFLDVPTEEPLRQSFTCALQKEILYQGKLFVSENWICFHSKVFGKDTKISIPAFSVTLIKKTKTALLVPNALIIATVTDRYIFVSLLSRDSTYKLLKSICGHLENTSVGNSPNPSSAENSFRADRPSSLRLDFNDEFSDLDGVVQQRRQDLEGYSSSGSQTPESENSRDFHVTESQTVLNVTKGETKPPRTDAHGSRAPDGKAKILPAHGQSETIGILHKMESRKCPTLRHILIFYAIIVCALIISTFYMRYRINTLEERLGSLTSIMDPHSTEQTAPSSLGSQVQLNVEVLCQELTANIVTLEKIQNNLQKLLENGD</sequence>
<protein>
    <recommendedName>
        <fullName>GRAM domain-containing protein 2B</fullName>
    </recommendedName>
    <alternativeName>
        <fullName>GRAM domain-containing protein 3</fullName>
    </alternativeName>
</protein>
<accession>Q5FVG8</accession>
<dbReference type="EMBL" id="BC090001">
    <property type="protein sequence ID" value="AAH90001.1"/>
    <property type="molecule type" value="mRNA"/>
</dbReference>
<dbReference type="RefSeq" id="NP_001014033.1">
    <property type="nucleotide sequence ID" value="NM_001014011.1"/>
</dbReference>
<dbReference type="SMR" id="Q5FVG8"/>
<dbReference type="FunCoup" id="Q5FVG8">
    <property type="interactions" value="758"/>
</dbReference>
<dbReference type="STRING" id="10116.ENSRNOP00000020570"/>
<dbReference type="iPTMnet" id="Q5FVG8"/>
<dbReference type="PhosphoSitePlus" id="Q5FVG8"/>
<dbReference type="PaxDb" id="10116-ENSRNOP00000020570"/>
<dbReference type="Ensembl" id="ENSRNOT00000020570.7">
    <property type="protein sequence ID" value="ENSRNOP00000020570.5"/>
    <property type="gene ID" value="ENSRNOG00000015225.8"/>
</dbReference>
<dbReference type="GeneID" id="307288"/>
<dbReference type="KEGG" id="rno:307288"/>
<dbReference type="UCSC" id="RGD:1311016">
    <property type="organism name" value="rat"/>
</dbReference>
<dbReference type="AGR" id="RGD:1311016"/>
<dbReference type="CTD" id="65983"/>
<dbReference type="RGD" id="1311016">
    <property type="gene designation" value="Gramd2b"/>
</dbReference>
<dbReference type="eggNOG" id="KOG1032">
    <property type="taxonomic scope" value="Eukaryota"/>
</dbReference>
<dbReference type="GeneTree" id="ENSGT00940000156980"/>
<dbReference type="InParanoid" id="Q5FVG8"/>
<dbReference type="OMA" id="ICSTFYM"/>
<dbReference type="OrthoDB" id="74360at2759"/>
<dbReference type="PhylomeDB" id="Q5FVG8"/>
<dbReference type="PRO" id="PR:Q5FVG8"/>
<dbReference type="Proteomes" id="UP000002494">
    <property type="component" value="Chromosome 18"/>
</dbReference>
<dbReference type="Bgee" id="ENSRNOG00000015225">
    <property type="expression patterns" value="Expressed in jejunum and 20 other cell types or tissues"/>
</dbReference>
<dbReference type="ExpressionAtlas" id="Q5FVG8">
    <property type="expression patterns" value="baseline and differential"/>
</dbReference>
<dbReference type="GO" id="GO:0005881">
    <property type="term" value="C:cytoplasmic microtubule"/>
    <property type="evidence" value="ECO:0000250"/>
    <property type="project" value="UniProtKB"/>
</dbReference>
<dbReference type="GO" id="GO:0042802">
    <property type="term" value="F:identical protein binding"/>
    <property type="evidence" value="ECO:0000266"/>
    <property type="project" value="RGD"/>
</dbReference>
<dbReference type="CDD" id="cd13220">
    <property type="entry name" value="PH-GRAM_GRAMDC"/>
    <property type="match status" value="1"/>
</dbReference>
<dbReference type="FunFam" id="2.30.29.30:FF:000086">
    <property type="entry name" value="GRAM domain-containing protein 2B isoform 2"/>
    <property type="match status" value="1"/>
</dbReference>
<dbReference type="Gene3D" id="2.30.29.30">
    <property type="entry name" value="Pleckstrin-homology domain (PH domain)/Phosphotyrosine-binding domain (PTB)"/>
    <property type="match status" value="1"/>
</dbReference>
<dbReference type="InterPro" id="IPR004182">
    <property type="entry name" value="GRAM"/>
</dbReference>
<dbReference type="InterPro" id="IPR052633">
    <property type="entry name" value="GRAM_domain_protein_2B"/>
</dbReference>
<dbReference type="InterPro" id="IPR011993">
    <property type="entry name" value="PH-like_dom_sf"/>
</dbReference>
<dbReference type="PANTHER" id="PTHR46645:SF2">
    <property type="entry name" value="GRAM DOMAIN-CONTAINING PROTEIN 2B"/>
    <property type="match status" value="1"/>
</dbReference>
<dbReference type="PANTHER" id="PTHR46645">
    <property type="entry name" value="GRAM DOMAIN-CONTAINING PROTEIN 2B-RELATED"/>
    <property type="match status" value="1"/>
</dbReference>
<dbReference type="Pfam" id="PF02893">
    <property type="entry name" value="GRAM"/>
    <property type="match status" value="1"/>
</dbReference>
<dbReference type="SMART" id="SM00568">
    <property type="entry name" value="GRAM"/>
    <property type="match status" value="1"/>
</dbReference>
<gene>
    <name type="primary">Gramd2b</name>
    <name type="synonym">Gramd3</name>
</gene>
<reference key="1">
    <citation type="journal article" date="2004" name="Genome Res.">
        <title>The status, quality, and expansion of the NIH full-length cDNA project: the Mammalian Gene Collection (MGC).</title>
        <authorList>
            <consortium name="The MGC Project Team"/>
        </authorList>
    </citation>
    <scope>NUCLEOTIDE SEQUENCE [LARGE SCALE MRNA]</scope>
    <source>
        <tissue>Liver</tissue>
    </source>
</reference>
<reference key="2">
    <citation type="journal article" date="2012" name="Nat. Commun.">
        <title>Quantitative maps of protein phosphorylation sites across 14 different rat organs and tissues.</title>
        <authorList>
            <person name="Lundby A."/>
            <person name="Secher A."/>
            <person name="Lage K."/>
            <person name="Nordsborg N.B."/>
            <person name="Dmytriyev A."/>
            <person name="Lundby C."/>
            <person name="Olsen J.V."/>
        </authorList>
    </citation>
    <scope>PHOSPHORYLATION [LARGE SCALE ANALYSIS] AT SER-265</scope>
    <scope>IDENTIFICATION BY MASS SPECTROMETRY [LARGE SCALE ANALYSIS]</scope>
</reference>
<proteinExistence type="evidence at protein level"/>
<evidence type="ECO:0000250" key="1">
    <source>
        <dbReference type="UniProtKB" id="Q6PEM6"/>
    </source>
</evidence>
<evidence type="ECO:0000250" key="2">
    <source>
        <dbReference type="UniProtKB" id="Q96HH9"/>
    </source>
</evidence>
<evidence type="ECO:0000256" key="3">
    <source>
        <dbReference type="SAM" id="MobiDB-lite"/>
    </source>
</evidence>
<evidence type="ECO:0007744" key="4">
    <source>
    </source>
</evidence>
<organism>
    <name type="scientific">Rattus norvegicus</name>
    <name type="common">Rat</name>
    <dbReference type="NCBI Taxonomy" id="10116"/>
    <lineage>
        <taxon>Eukaryota</taxon>
        <taxon>Metazoa</taxon>
        <taxon>Chordata</taxon>
        <taxon>Craniata</taxon>
        <taxon>Vertebrata</taxon>
        <taxon>Euteleostomi</taxon>
        <taxon>Mammalia</taxon>
        <taxon>Eutheria</taxon>
        <taxon>Euarchontoglires</taxon>
        <taxon>Glires</taxon>
        <taxon>Rodentia</taxon>
        <taxon>Myomorpha</taxon>
        <taxon>Muroidea</taxon>
        <taxon>Muridae</taxon>
        <taxon>Murinae</taxon>
        <taxon>Rattus</taxon>
    </lineage>
</organism>